<proteinExistence type="inferred from homology"/>
<dbReference type="EC" id="6.3.5.2" evidence="1"/>
<dbReference type="EMBL" id="BA000037">
    <property type="protein sequence ID" value="BAC93540.1"/>
    <property type="molecule type" value="Genomic_DNA"/>
</dbReference>
<dbReference type="RefSeq" id="WP_011149610.1">
    <property type="nucleotide sequence ID" value="NC_005139.1"/>
</dbReference>
<dbReference type="SMR" id="Q7MNE1"/>
<dbReference type="STRING" id="672.VV93_v1c07220"/>
<dbReference type="KEGG" id="vvy:VV0776"/>
<dbReference type="PATRIC" id="fig|196600.6.peg.791"/>
<dbReference type="eggNOG" id="COG0518">
    <property type="taxonomic scope" value="Bacteria"/>
</dbReference>
<dbReference type="eggNOG" id="COG0519">
    <property type="taxonomic scope" value="Bacteria"/>
</dbReference>
<dbReference type="HOGENOM" id="CLU_014340_0_5_6"/>
<dbReference type="UniPathway" id="UPA00189">
    <property type="reaction ID" value="UER00296"/>
</dbReference>
<dbReference type="Proteomes" id="UP000002675">
    <property type="component" value="Chromosome I"/>
</dbReference>
<dbReference type="GO" id="GO:0005829">
    <property type="term" value="C:cytosol"/>
    <property type="evidence" value="ECO:0007669"/>
    <property type="project" value="TreeGrafter"/>
</dbReference>
<dbReference type="GO" id="GO:0005524">
    <property type="term" value="F:ATP binding"/>
    <property type="evidence" value="ECO:0007669"/>
    <property type="project" value="UniProtKB-UniRule"/>
</dbReference>
<dbReference type="GO" id="GO:0003921">
    <property type="term" value="F:GMP synthase activity"/>
    <property type="evidence" value="ECO:0007669"/>
    <property type="project" value="InterPro"/>
</dbReference>
<dbReference type="CDD" id="cd01742">
    <property type="entry name" value="GATase1_GMP_Synthase"/>
    <property type="match status" value="1"/>
</dbReference>
<dbReference type="CDD" id="cd01997">
    <property type="entry name" value="GMP_synthase_C"/>
    <property type="match status" value="1"/>
</dbReference>
<dbReference type="FunFam" id="3.30.300.10:FF:000002">
    <property type="entry name" value="GMP synthase [glutamine-hydrolyzing]"/>
    <property type="match status" value="1"/>
</dbReference>
<dbReference type="FunFam" id="3.40.50.620:FF:000001">
    <property type="entry name" value="GMP synthase [glutamine-hydrolyzing]"/>
    <property type="match status" value="1"/>
</dbReference>
<dbReference type="FunFam" id="3.40.50.880:FF:000001">
    <property type="entry name" value="GMP synthase [glutamine-hydrolyzing]"/>
    <property type="match status" value="1"/>
</dbReference>
<dbReference type="Gene3D" id="3.30.300.10">
    <property type="match status" value="1"/>
</dbReference>
<dbReference type="Gene3D" id="3.40.50.880">
    <property type="match status" value="1"/>
</dbReference>
<dbReference type="Gene3D" id="3.40.50.620">
    <property type="entry name" value="HUPs"/>
    <property type="match status" value="1"/>
</dbReference>
<dbReference type="HAMAP" id="MF_00344">
    <property type="entry name" value="GMP_synthase"/>
    <property type="match status" value="1"/>
</dbReference>
<dbReference type="InterPro" id="IPR029062">
    <property type="entry name" value="Class_I_gatase-like"/>
</dbReference>
<dbReference type="InterPro" id="IPR017926">
    <property type="entry name" value="GATASE"/>
</dbReference>
<dbReference type="InterPro" id="IPR001674">
    <property type="entry name" value="GMP_synth_C"/>
</dbReference>
<dbReference type="InterPro" id="IPR004739">
    <property type="entry name" value="GMP_synth_GATase"/>
</dbReference>
<dbReference type="InterPro" id="IPR022955">
    <property type="entry name" value="GMP_synthase"/>
</dbReference>
<dbReference type="InterPro" id="IPR025777">
    <property type="entry name" value="GMPS_ATP_PPase_dom"/>
</dbReference>
<dbReference type="InterPro" id="IPR022310">
    <property type="entry name" value="NAD/GMP_synthase"/>
</dbReference>
<dbReference type="InterPro" id="IPR014729">
    <property type="entry name" value="Rossmann-like_a/b/a_fold"/>
</dbReference>
<dbReference type="NCBIfam" id="TIGR00884">
    <property type="entry name" value="guaA_Cterm"/>
    <property type="match status" value="1"/>
</dbReference>
<dbReference type="NCBIfam" id="TIGR00888">
    <property type="entry name" value="guaA_Nterm"/>
    <property type="match status" value="1"/>
</dbReference>
<dbReference type="NCBIfam" id="NF000848">
    <property type="entry name" value="PRK00074.1"/>
    <property type="match status" value="1"/>
</dbReference>
<dbReference type="PANTHER" id="PTHR11922:SF2">
    <property type="entry name" value="GMP SYNTHASE [GLUTAMINE-HYDROLYZING]"/>
    <property type="match status" value="1"/>
</dbReference>
<dbReference type="PANTHER" id="PTHR11922">
    <property type="entry name" value="GMP SYNTHASE-RELATED"/>
    <property type="match status" value="1"/>
</dbReference>
<dbReference type="Pfam" id="PF00117">
    <property type="entry name" value="GATase"/>
    <property type="match status" value="1"/>
</dbReference>
<dbReference type="Pfam" id="PF00958">
    <property type="entry name" value="GMP_synt_C"/>
    <property type="match status" value="1"/>
</dbReference>
<dbReference type="Pfam" id="PF02540">
    <property type="entry name" value="NAD_synthase"/>
    <property type="match status" value="1"/>
</dbReference>
<dbReference type="PRINTS" id="PR00097">
    <property type="entry name" value="ANTSNTHASEII"/>
</dbReference>
<dbReference type="PRINTS" id="PR00099">
    <property type="entry name" value="CPSGATASE"/>
</dbReference>
<dbReference type="PRINTS" id="PR00096">
    <property type="entry name" value="GATASE"/>
</dbReference>
<dbReference type="SUPFAM" id="SSF52402">
    <property type="entry name" value="Adenine nucleotide alpha hydrolases-like"/>
    <property type="match status" value="1"/>
</dbReference>
<dbReference type="SUPFAM" id="SSF52317">
    <property type="entry name" value="Class I glutamine amidotransferase-like"/>
    <property type="match status" value="1"/>
</dbReference>
<dbReference type="SUPFAM" id="SSF54810">
    <property type="entry name" value="GMP synthetase C-terminal dimerisation domain"/>
    <property type="match status" value="1"/>
</dbReference>
<dbReference type="PROSITE" id="PS51273">
    <property type="entry name" value="GATASE_TYPE_1"/>
    <property type="match status" value="1"/>
</dbReference>
<dbReference type="PROSITE" id="PS51553">
    <property type="entry name" value="GMPS_ATP_PPASE"/>
    <property type="match status" value="1"/>
</dbReference>
<protein>
    <recommendedName>
        <fullName evidence="1">GMP synthase [glutamine-hydrolyzing]</fullName>
        <ecNumber evidence="1">6.3.5.2</ecNumber>
    </recommendedName>
    <alternativeName>
        <fullName evidence="1">GMP synthetase</fullName>
    </alternativeName>
    <alternativeName>
        <fullName evidence="1">Glutamine amidotransferase</fullName>
    </alternativeName>
</protein>
<keyword id="KW-0067">ATP-binding</keyword>
<keyword id="KW-0315">Glutamine amidotransferase</keyword>
<keyword id="KW-0332">GMP biosynthesis</keyword>
<keyword id="KW-0436">Ligase</keyword>
<keyword id="KW-0547">Nucleotide-binding</keyword>
<keyword id="KW-0658">Purine biosynthesis</keyword>
<organism>
    <name type="scientific">Vibrio vulnificus (strain YJ016)</name>
    <dbReference type="NCBI Taxonomy" id="196600"/>
    <lineage>
        <taxon>Bacteria</taxon>
        <taxon>Pseudomonadati</taxon>
        <taxon>Pseudomonadota</taxon>
        <taxon>Gammaproteobacteria</taxon>
        <taxon>Vibrionales</taxon>
        <taxon>Vibrionaceae</taxon>
        <taxon>Vibrio</taxon>
    </lineage>
</organism>
<feature type="chain" id="PRO_0000140206" description="GMP synthase [glutamine-hydrolyzing]">
    <location>
        <begin position="1"/>
        <end position="517"/>
    </location>
</feature>
<feature type="domain" description="Glutamine amidotransferase type-1" evidence="1">
    <location>
        <begin position="9"/>
        <end position="199"/>
    </location>
</feature>
<feature type="domain" description="GMPS ATP-PPase" evidence="1">
    <location>
        <begin position="200"/>
        <end position="392"/>
    </location>
</feature>
<feature type="active site" description="Nucleophile" evidence="1">
    <location>
        <position position="86"/>
    </location>
</feature>
<feature type="active site" evidence="1">
    <location>
        <position position="173"/>
    </location>
</feature>
<feature type="active site" evidence="1">
    <location>
        <position position="175"/>
    </location>
</feature>
<feature type="binding site" evidence="1">
    <location>
        <begin position="227"/>
        <end position="233"/>
    </location>
    <ligand>
        <name>ATP</name>
        <dbReference type="ChEBI" id="CHEBI:30616"/>
    </ligand>
</feature>
<comment type="function">
    <text evidence="1">Catalyzes the synthesis of GMP from XMP.</text>
</comment>
<comment type="catalytic activity">
    <reaction evidence="1">
        <text>XMP + L-glutamine + ATP + H2O = GMP + L-glutamate + AMP + diphosphate + 2 H(+)</text>
        <dbReference type="Rhea" id="RHEA:11680"/>
        <dbReference type="ChEBI" id="CHEBI:15377"/>
        <dbReference type="ChEBI" id="CHEBI:15378"/>
        <dbReference type="ChEBI" id="CHEBI:29985"/>
        <dbReference type="ChEBI" id="CHEBI:30616"/>
        <dbReference type="ChEBI" id="CHEBI:33019"/>
        <dbReference type="ChEBI" id="CHEBI:57464"/>
        <dbReference type="ChEBI" id="CHEBI:58115"/>
        <dbReference type="ChEBI" id="CHEBI:58359"/>
        <dbReference type="ChEBI" id="CHEBI:456215"/>
        <dbReference type="EC" id="6.3.5.2"/>
    </reaction>
</comment>
<comment type="pathway">
    <text evidence="1">Purine metabolism; GMP biosynthesis; GMP from XMP (L-Gln route): step 1/1.</text>
</comment>
<comment type="subunit">
    <text evidence="1">Homodimer.</text>
</comment>
<accession>Q7MNE1</accession>
<evidence type="ECO:0000255" key="1">
    <source>
        <dbReference type="HAMAP-Rule" id="MF_00344"/>
    </source>
</evidence>
<reference key="1">
    <citation type="journal article" date="2003" name="Genome Res.">
        <title>Comparative genome analysis of Vibrio vulnificus, a marine pathogen.</title>
        <authorList>
            <person name="Chen C.-Y."/>
            <person name="Wu K.-M."/>
            <person name="Chang Y.-C."/>
            <person name="Chang C.-H."/>
            <person name="Tsai H.-C."/>
            <person name="Liao T.-L."/>
            <person name="Liu Y.-M."/>
            <person name="Chen H.-J."/>
            <person name="Shen A.B.-T."/>
            <person name="Li J.-C."/>
            <person name="Su T.-L."/>
            <person name="Shao C.-P."/>
            <person name="Lee C.-T."/>
            <person name="Hor L.-I."/>
            <person name="Tsai S.-F."/>
        </authorList>
    </citation>
    <scope>NUCLEOTIDE SEQUENCE [LARGE SCALE GENOMIC DNA]</scope>
    <source>
        <strain>YJ016</strain>
    </source>
</reference>
<name>GUAA_VIBVY</name>
<gene>
    <name evidence="1" type="primary">guaA</name>
    <name type="ordered locus">VV0776</name>
</gene>
<sequence>MTKNIHDQRILILDFGSQYTQLVARRVREIGVYCELWSWDVEEADIREFNPDGIILSGGPESVTEDNSPRAPQYVFDSGVPVLGVCYGMQTMAEQLGGKVSTSDEREFGYAAVKVSGESAIFKDLEATQDVWMSHGDKVVEIPAGFTKVGETDTCPYAAMANEEKKYYGVQFHPEVTHTKNGLQMLENFVLGVCGCERLWTSESIIEDAVARIKEQVGDDEVILGLSGGVDSSVVAMLVHRAIGDKLTCVFVDNGLLRLNEGQQVMDMFGDKFGLNIIKVDAEERFLKALEGKSDPEEKRKTIGHVFVDVFDEESKKLKNAKWLAQGTIYPDVIESAASKTGKAHVIKSHHNVGGLPDDMEMGLVEPLRELFKDEVRKIGLELGLPYEMLYRHPFPGPGLGVRVLGEIKKEYCDLLRRADAIFIEELHAADLYNKVSQAFTVFLPVRSVGVMGDGRKYDWVVSLRAVETIDFMTAHWAHLPYDFLGKVSNRIINEVNGISRVVYDISGKPPATIEWE</sequence>